<protein>
    <recommendedName>
        <fullName evidence="1">Uridylate kinase</fullName>
        <shortName evidence="1">UK</shortName>
        <ecNumber evidence="1">2.7.4.22</ecNumber>
    </recommendedName>
    <alternativeName>
        <fullName evidence="1">Uridine monophosphate kinase</fullName>
        <shortName evidence="1">UMP kinase</shortName>
        <shortName evidence="1">UMPK</shortName>
    </alternativeName>
</protein>
<comment type="function">
    <text evidence="1">Catalyzes the reversible phosphorylation of UMP to UDP.</text>
</comment>
<comment type="catalytic activity">
    <reaction evidence="1">
        <text>UMP + ATP = UDP + ADP</text>
        <dbReference type="Rhea" id="RHEA:24400"/>
        <dbReference type="ChEBI" id="CHEBI:30616"/>
        <dbReference type="ChEBI" id="CHEBI:57865"/>
        <dbReference type="ChEBI" id="CHEBI:58223"/>
        <dbReference type="ChEBI" id="CHEBI:456216"/>
        <dbReference type="EC" id="2.7.4.22"/>
    </reaction>
</comment>
<comment type="activity regulation">
    <text evidence="1">Inhibited by UTP.</text>
</comment>
<comment type="pathway">
    <text evidence="1">Pyrimidine metabolism; CTP biosynthesis via de novo pathway; UDP from UMP (UMPK route): step 1/1.</text>
</comment>
<comment type="subunit">
    <text evidence="1">Homohexamer.</text>
</comment>
<comment type="subcellular location">
    <subcellularLocation>
        <location evidence="1">Cytoplasm</location>
    </subcellularLocation>
</comment>
<comment type="similarity">
    <text evidence="1">Belongs to the UMP kinase family.</text>
</comment>
<keyword id="KW-0067">ATP-binding</keyword>
<keyword id="KW-0963">Cytoplasm</keyword>
<keyword id="KW-0418">Kinase</keyword>
<keyword id="KW-0547">Nucleotide-binding</keyword>
<keyword id="KW-0665">Pyrimidine biosynthesis</keyword>
<keyword id="KW-0808">Transferase</keyword>
<feature type="chain" id="PRO_1000054022" description="Uridylate kinase">
    <location>
        <begin position="1"/>
        <end position="235"/>
    </location>
</feature>
<feature type="binding site" evidence="1">
    <location>
        <begin position="10"/>
        <end position="13"/>
    </location>
    <ligand>
        <name>ATP</name>
        <dbReference type="ChEBI" id="CHEBI:30616"/>
    </ligand>
</feature>
<feature type="binding site" evidence="1">
    <location>
        <position position="52"/>
    </location>
    <ligand>
        <name>UMP</name>
        <dbReference type="ChEBI" id="CHEBI:57865"/>
    </ligand>
</feature>
<feature type="binding site" evidence="1">
    <location>
        <position position="53"/>
    </location>
    <ligand>
        <name>ATP</name>
        <dbReference type="ChEBI" id="CHEBI:30616"/>
    </ligand>
</feature>
<feature type="binding site" evidence="1">
    <location>
        <position position="57"/>
    </location>
    <ligand>
        <name>ATP</name>
        <dbReference type="ChEBI" id="CHEBI:30616"/>
    </ligand>
</feature>
<feature type="binding site" evidence="1">
    <location>
        <position position="72"/>
    </location>
    <ligand>
        <name>UMP</name>
        <dbReference type="ChEBI" id="CHEBI:57865"/>
    </ligand>
</feature>
<feature type="binding site" evidence="1">
    <location>
        <begin position="133"/>
        <end position="140"/>
    </location>
    <ligand>
        <name>UMP</name>
        <dbReference type="ChEBI" id="CHEBI:57865"/>
    </ligand>
</feature>
<feature type="binding site" evidence="1">
    <location>
        <position position="160"/>
    </location>
    <ligand>
        <name>ATP</name>
        <dbReference type="ChEBI" id="CHEBI:30616"/>
    </ligand>
</feature>
<feature type="binding site" evidence="1">
    <location>
        <position position="166"/>
    </location>
    <ligand>
        <name>ATP</name>
        <dbReference type="ChEBI" id="CHEBI:30616"/>
    </ligand>
</feature>
<feature type="binding site" evidence="1">
    <location>
        <position position="169"/>
    </location>
    <ligand>
        <name>ATP</name>
        <dbReference type="ChEBI" id="CHEBI:30616"/>
    </ligand>
</feature>
<gene>
    <name evidence="1" type="primary">pyrH</name>
    <name type="ordered locus">Acid_0904</name>
</gene>
<accession>Q02AL3</accession>
<proteinExistence type="inferred from homology"/>
<name>PYRH_SOLUE</name>
<sequence>MAGYKRILLKLSGEALAGAATFGIDADRVRSLGREVADVAASGIQVGVVVGGGNIFRGVAAAARSMDRVTGDHMGMLATVINSLALSDALEQMGIPTRVMSAIEMHQVAEPYIRRRAIRHLEKGRIVIFAAGTSNPYFSTDTAATLRALEIKADVIAKATRVDGVYDKDPLKHPDAVKFPEISYLEVLSRGLGVMDATSIAMCRDNKLPIIVFNLNTIGNIMRMSMGETIGTVIH</sequence>
<organism>
    <name type="scientific">Solibacter usitatus (strain Ellin6076)</name>
    <dbReference type="NCBI Taxonomy" id="234267"/>
    <lineage>
        <taxon>Bacteria</taxon>
        <taxon>Pseudomonadati</taxon>
        <taxon>Acidobacteriota</taxon>
        <taxon>Terriglobia</taxon>
        <taxon>Bryobacterales</taxon>
        <taxon>Solibacteraceae</taxon>
        <taxon>Candidatus Solibacter</taxon>
    </lineage>
</organism>
<reference key="1">
    <citation type="journal article" date="2009" name="Appl. Environ. Microbiol.">
        <title>Three genomes from the phylum Acidobacteria provide insight into the lifestyles of these microorganisms in soils.</title>
        <authorList>
            <person name="Ward N.L."/>
            <person name="Challacombe J.F."/>
            <person name="Janssen P.H."/>
            <person name="Henrissat B."/>
            <person name="Coutinho P.M."/>
            <person name="Wu M."/>
            <person name="Xie G."/>
            <person name="Haft D.H."/>
            <person name="Sait M."/>
            <person name="Badger J."/>
            <person name="Barabote R.D."/>
            <person name="Bradley B."/>
            <person name="Brettin T.S."/>
            <person name="Brinkac L.M."/>
            <person name="Bruce D."/>
            <person name="Creasy T."/>
            <person name="Daugherty S.C."/>
            <person name="Davidsen T.M."/>
            <person name="DeBoy R.T."/>
            <person name="Detter J.C."/>
            <person name="Dodson R.J."/>
            <person name="Durkin A.S."/>
            <person name="Ganapathy A."/>
            <person name="Gwinn-Giglio M."/>
            <person name="Han C.S."/>
            <person name="Khouri H."/>
            <person name="Kiss H."/>
            <person name="Kothari S.P."/>
            <person name="Madupu R."/>
            <person name="Nelson K.E."/>
            <person name="Nelson W.C."/>
            <person name="Paulsen I."/>
            <person name="Penn K."/>
            <person name="Ren Q."/>
            <person name="Rosovitz M.J."/>
            <person name="Selengut J.D."/>
            <person name="Shrivastava S."/>
            <person name="Sullivan S.A."/>
            <person name="Tapia R."/>
            <person name="Thompson L.S."/>
            <person name="Watkins K.L."/>
            <person name="Yang Q."/>
            <person name="Yu C."/>
            <person name="Zafar N."/>
            <person name="Zhou L."/>
            <person name="Kuske C.R."/>
        </authorList>
    </citation>
    <scope>NUCLEOTIDE SEQUENCE [LARGE SCALE GENOMIC DNA]</scope>
    <source>
        <strain>Ellin6076</strain>
    </source>
</reference>
<dbReference type="EC" id="2.7.4.22" evidence="1"/>
<dbReference type="EMBL" id="CP000473">
    <property type="protein sequence ID" value="ABJ81903.1"/>
    <property type="molecule type" value="Genomic_DNA"/>
</dbReference>
<dbReference type="SMR" id="Q02AL3"/>
<dbReference type="FunCoup" id="Q02AL3">
    <property type="interactions" value="689"/>
</dbReference>
<dbReference type="STRING" id="234267.Acid_0904"/>
<dbReference type="KEGG" id="sus:Acid_0904"/>
<dbReference type="eggNOG" id="COG0528">
    <property type="taxonomic scope" value="Bacteria"/>
</dbReference>
<dbReference type="HOGENOM" id="CLU_033861_0_0_0"/>
<dbReference type="InParanoid" id="Q02AL3"/>
<dbReference type="OrthoDB" id="9807458at2"/>
<dbReference type="UniPathway" id="UPA00159">
    <property type="reaction ID" value="UER00275"/>
</dbReference>
<dbReference type="GO" id="GO:0005737">
    <property type="term" value="C:cytoplasm"/>
    <property type="evidence" value="ECO:0007669"/>
    <property type="project" value="UniProtKB-SubCell"/>
</dbReference>
<dbReference type="GO" id="GO:0005524">
    <property type="term" value="F:ATP binding"/>
    <property type="evidence" value="ECO:0007669"/>
    <property type="project" value="UniProtKB-KW"/>
</dbReference>
<dbReference type="GO" id="GO:0033862">
    <property type="term" value="F:UMP kinase activity"/>
    <property type="evidence" value="ECO:0007669"/>
    <property type="project" value="UniProtKB-EC"/>
</dbReference>
<dbReference type="GO" id="GO:0044210">
    <property type="term" value="P:'de novo' CTP biosynthetic process"/>
    <property type="evidence" value="ECO:0007669"/>
    <property type="project" value="UniProtKB-UniRule"/>
</dbReference>
<dbReference type="GO" id="GO:0006225">
    <property type="term" value="P:UDP biosynthetic process"/>
    <property type="evidence" value="ECO:0007669"/>
    <property type="project" value="TreeGrafter"/>
</dbReference>
<dbReference type="CDD" id="cd04254">
    <property type="entry name" value="AAK_UMPK-PyrH-Ec"/>
    <property type="match status" value="1"/>
</dbReference>
<dbReference type="FunFam" id="3.40.1160.10:FF:000001">
    <property type="entry name" value="Uridylate kinase"/>
    <property type="match status" value="1"/>
</dbReference>
<dbReference type="Gene3D" id="3.40.1160.10">
    <property type="entry name" value="Acetylglutamate kinase-like"/>
    <property type="match status" value="1"/>
</dbReference>
<dbReference type="HAMAP" id="MF_01220_B">
    <property type="entry name" value="PyrH_B"/>
    <property type="match status" value="1"/>
</dbReference>
<dbReference type="InterPro" id="IPR036393">
    <property type="entry name" value="AceGlu_kinase-like_sf"/>
</dbReference>
<dbReference type="InterPro" id="IPR001048">
    <property type="entry name" value="Asp/Glu/Uridylate_kinase"/>
</dbReference>
<dbReference type="InterPro" id="IPR011817">
    <property type="entry name" value="Uridylate_kinase"/>
</dbReference>
<dbReference type="InterPro" id="IPR015963">
    <property type="entry name" value="Uridylate_kinase_bac"/>
</dbReference>
<dbReference type="NCBIfam" id="TIGR02075">
    <property type="entry name" value="pyrH_bact"/>
    <property type="match status" value="1"/>
</dbReference>
<dbReference type="PANTHER" id="PTHR42833">
    <property type="entry name" value="URIDYLATE KINASE"/>
    <property type="match status" value="1"/>
</dbReference>
<dbReference type="PANTHER" id="PTHR42833:SF4">
    <property type="entry name" value="URIDYLATE KINASE PUMPKIN, CHLOROPLASTIC"/>
    <property type="match status" value="1"/>
</dbReference>
<dbReference type="Pfam" id="PF00696">
    <property type="entry name" value="AA_kinase"/>
    <property type="match status" value="1"/>
</dbReference>
<dbReference type="PIRSF" id="PIRSF005650">
    <property type="entry name" value="Uridylate_kin"/>
    <property type="match status" value="1"/>
</dbReference>
<dbReference type="SUPFAM" id="SSF53633">
    <property type="entry name" value="Carbamate kinase-like"/>
    <property type="match status" value="1"/>
</dbReference>
<evidence type="ECO:0000255" key="1">
    <source>
        <dbReference type="HAMAP-Rule" id="MF_01220"/>
    </source>
</evidence>